<proteinExistence type="inferred from homology"/>
<gene>
    <name evidence="1" type="primary">rnpA</name>
    <name type="ordered locus">BAA_5771</name>
</gene>
<keyword id="KW-0255">Endonuclease</keyword>
<keyword id="KW-0378">Hydrolase</keyword>
<keyword id="KW-0540">Nuclease</keyword>
<keyword id="KW-0694">RNA-binding</keyword>
<keyword id="KW-0819">tRNA processing</keyword>
<protein>
    <recommendedName>
        <fullName evidence="1">Ribonuclease P protein component</fullName>
        <shortName evidence="1">RNase P protein</shortName>
        <shortName evidence="1">RNaseP protein</shortName>
        <ecNumber evidence="1">3.1.26.5</ecNumber>
    </recommendedName>
    <alternativeName>
        <fullName evidence="1">Protein C5</fullName>
    </alternativeName>
</protein>
<name>RNPA_BACAA</name>
<comment type="function">
    <text evidence="1">RNaseP catalyzes the removal of the 5'-leader sequence from pre-tRNA to produce the mature 5'-terminus. It can also cleave other RNA substrates such as 4.5S RNA. The protein component plays an auxiliary but essential role in vivo by binding to the 5'-leader sequence and broadening the substrate specificity of the ribozyme.</text>
</comment>
<comment type="catalytic activity">
    <reaction evidence="1">
        <text>Endonucleolytic cleavage of RNA, removing 5'-extranucleotides from tRNA precursor.</text>
        <dbReference type="EC" id="3.1.26.5"/>
    </reaction>
</comment>
<comment type="subunit">
    <text evidence="1">Consists of a catalytic RNA component (M1 or rnpB) and a protein subunit.</text>
</comment>
<comment type="similarity">
    <text evidence="1">Belongs to the RnpA family.</text>
</comment>
<feature type="chain" id="PRO_1000194600" description="Ribonuclease P protein component">
    <location>
        <begin position="1"/>
        <end position="119"/>
    </location>
</feature>
<dbReference type="EC" id="3.1.26.5" evidence="1"/>
<dbReference type="EMBL" id="CP001598">
    <property type="protein sequence ID" value="ACQ49071.1"/>
    <property type="molecule type" value="Genomic_DNA"/>
</dbReference>
<dbReference type="RefSeq" id="WP_000726628.1">
    <property type="nucleotide sequence ID" value="NC_012659.1"/>
</dbReference>
<dbReference type="SMR" id="C3P3F8"/>
<dbReference type="GeneID" id="45025315"/>
<dbReference type="KEGG" id="bai:BAA_5771"/>
<dbReference type="HOGENOM" id="CLU_117179_9_1_9"/>
<dbReference type="GO" id="GO:0030677">
    <property type="term" value="C:ribonuclease P complex"/>
    <property type="evidence" value="ECO:0007669"/>
    <property type="project" value="TreeGrafter"/>
</dbReference>
<dbReference type="GO" id="GO:0042781">
    <property type="term" value="F:3'-tRNA processing endoribonuclease activity"/>
    <property type="evidence" value="ECO:0007669"/>
    <property type="project" value="TreeGrafter"/>
</dbReference>
<dbReference type="GO" id="GO:0004526">
    <property type="term" value="F:ribonuclease P activity"/>
    <property type="evidence" value="ECO:0007669"/>
    <property type="project" value="UniProtKB-UniRule"/>
</dbReference>
<dbReference type="GO" id="GO:0000049">
    <property type="term" value="F:tRNA binding"/>
    <property type="evidence" value="ECO:0007669"/>
    <property type="project" value="UniProtKB-UniRule"/>
</dbReference>
<dbReference type="GO" id="GO:0001682">
    <property type="term" value="P:tRNA 5'-leader removal"/>
    <property type="evidence" value="ECO:0007669"/>
    <property type="project" value="UniProtKB-UniRule"/>
</dbReference>
<dbReference type="FunFam" id="3.30.230.10:FF:000021">
    <property type="entry name" value="Ribonuclease P protein component"/>
    <property type="match status" value="1"/>
</dbReference>
<dbReference type="Gene3D" id="3.30.230.10">
    <property type="match status" value="1"/>
</dbReference>
<dbReference type="HAMAP" id="MF_00227">
    <property type="entry name" value="RNase_P"/>
    <property type="match status" value="1"/>
</dbReference>
<dbReference type="InterPro" id="IPR020568">
    <property type="entry name" value="Ribosomal_Su5_D2-typ_SF"/>
</dbReference>
<dbReference type="InterPro" id="IPR014721">
    <property type="entry name" value="Ribsml_uS5_D2-typ_fold_subgr"/>
</dbReference>
<dbReference type="InterPro" id="IPR000100">
    <property type="entry name" value="RNase_P"/>
</dbReference>
<dbReference type="InterPro" id="IPR020539">
    <property type="entry name" value="RNase_P_CS"/>
</dbReference>
<dbReference type="NCBIfam" id="TIGR00188">
    <property type="entry name" value="rnpA"/>
    <property type="match status" value="1"/>
</dbReference>
<dbReference type="PANTHER" id="PTHR33992">
    <property type="entry name" value="RIBONUCLEASE P PROTEIN COMPONENT"/>
    <property type="match status" value="1"/>
</dbReference>
<dbReference type="PANTHER" id="PTHR33992:SF1">
    <property type="entry name" value="RIBONUCLEASE P PROTEIN COMPONENT"/>
    <property type="match status" value="1"/>
</dbReference>
<dbReference type="Pfam" id="PF00825">
    <property type="entry name" value="Ribonuclease_P"/>
    <property type="match status" value="1"/>
</dbReference>
<dbReference type="SUPFAM" id="SSF54211">
    <property type="entry name" value="Ribosomal protein S5 domain 2-like"/>
    <property type="match status" value="1"/>
</dbReference>
<dbReference type="PROSITE" id="PS00648">
    <property type="entry name" value="RIBONUCLEASE_P"/>
    <property type="match status" value="1"/>
</dbReference>
<reference key="1">
    <citation type="submission" date="2009-04" db="EMBL/GenBank/DDBJ databases">
        <title>Genome sequence of Bacillus anthracis A0248.</title>
        <authorList>
            <person name="Dodson R.J."/>
            <person name="Munk A.C."/>
            <person name="Bruce D."/>
            <person name="Detter C."/>
            <person name="Tapia R."/>
            <person name="Sutton G."/>
            <person name="Sims D."/>
            <person name="Brettin T."/>
        </authorList>
    </citation>
    <scope>NUCLEOTIDE SEQUENCE [LARGE SCALE GENOMIC DNA]</scope>
    <source>
        <strain>A0248</strain>
    </source>
</reference>
<accession>C3P3F8</accession>
<organism>
    <name type="scientific">Bacillus anthracis (strain A0248)</name>
    <dbReference type="NCBI Taxonomy" id="592021"/>
    <lineage>
        <taxon>Bacteria</taxon>
        <taxon>Bacillati</taxon>
        <taxon>Bacillota</taxon>
        <taxon>Bacilli</taxon>
        <taxon>Bacillales</taxon>
        <taxon>Bacillaceae</taxon>
        <taxon>Bacillus</taxon>
        <taxon>Bacillus cereus group</taxon>
    </lineage>
</organism>
<evidence type="ECO:0000255" key="1">
    <source>
        <dbReference type="HAMAP-Rule" id="MF_00227"/>
    </source>
</evidence>
<sequence length="119" mass="14027">MKKKHRIKKNDEFQTVFQKGKSNANRQFVVYQLDKEEQPNFRIGLSVSKKIGNAVVRNRIKRMIRQSITELKDEIDSGKDFVIIARKPCAEMTYEELKKSLIHVFKRSGMKRIKSSVRK</sequence>